<comment type="function">
    <text evidence="1">Catalyzes the transfer of a dimethylallyl group onto the adenine at position 37 in tRNAs that read codons beginning with uridine, leading to the formation of N6-(dimethylallyl)adenosine (i(6)A).</text>
</comment>
<comment type="catalytic activity">
    <reaction evidence="1">
        <text>adenosine(37) in tRNA + dimethylallyl diphosphate = N(6)-dimethylallyladenosine(37) in tRNA + diphosphate</text>
        <dbReference type="Rhea" id="RHEA:26482"/>
        <dbReference type="Rhea" id="RHEA-COMP:10162"/>
        <dbReference type="Rhea" id="RHEA-COMP:10375"/>
        <dbReference type="ChEBI" id="CHEBI:33019"/>
        <dbReference type="ChEBI" id="CHEBI:57623"/>
        <dbReference type="ChEBI" id="CHEBI:74411"/>
        <dbReference type="ChEBI" id="CHEBI:74415"/>
        <dbReference type="EC" id="2.5.1.75"/>
    </reaction>
</comment>
<comment type="cofactor">
    <cofactor evidence="1">
        <name>Mg(2+)</name>
        <dbReference type="ChEBI" id="CHEBI:18420"/>
    </cofactor>
</comment>
<comment type="subunit">
    <text evidence="1">Monomer.</text>
</comment>
<comment type="similarity">
    <text evidence="1">Belongs to the IPP transferase family.</text>
</comment>
<feature type="chain" id="PRO_1000020593" description="tRNA dimethylallyltransferase">
    <location>
        <begin position="1"/>
        <end position="309"/>
    </location>
</feature>
<feature type="region of interest" description="Interaction with substrate tRNA" evidence="1">
    <location>
        <begin position="38"/>
        <end position="41"/>
    </location>
</feature>
<feature type="region of interest" description="Interaction with substrate tRNA" evidence="1">
    <location>
        <begin position="162"/>
        <end position="166"/>
    </location>
</feature>
<feature type="binding site" evidence="1">
    <location>
        <begin position="13"/>
        <end position="20"/>
    </location>
    <ligand>
        <name>ATP</name>
        <dbReference type="ChEBI" id="CHEBI:30616"/>
    </ligand>
</feature>
<feature type="binding site" evidence="1">
    <location>
        <begin position="15"/>
        <end position="20"/>
    </location>
    <ligand>
        <name>substrate</name>
    </ligand>
</feature>
<feature type="site" description="Interaction with substrate tRNA" evidence="1">
    <location>
        <position position="104"/>
    </location>
</feature>
<feature type="site" description="Interaction with substrate tRNA" evidence="1">
    <location>
        <position position="128"/>
    </location>
</feature>
<sequence>MSNELPAVICLVGPTGAGKTAAALHLAERFAGTVINADSRQVYRDFPIITAQPTAEEQAQCPHRLYGFLETEARMSAGVWGDHATAAIDEALAQGRLPLLVGGTGMYVRALLDGIAAIPAIPRDIHVRWQERCAAEGPQRLHAMLCDIDAEYAARIHPNDRQRVTRALEVHEHTGRTFSEWHRSAMPAPRYRALRIGFAATLDALTPRLAHRIDLMLAAGALDEARRARVHCDDPSAPGWSGIGCAETYAHLVGSLDYEAMRHVWLHNTRAYAKRQLTWFRADTRLTWYAPDDVEGIALGVASFLRGGA</sequence>
<dbReference type="EC" id="2.5.1.75" evidence="1"/>
<dbReference type="EMBL" id="CP000527">
    <property type="protein sequence ID" value="ABM28615.1"/>
    <property type="molecule type" value="Genomic_DNA"/>
</dbReference>
<dbReference type="RefSeq" id="WP_010938825.1">
    <property type="nucleotide sequence ID" value="NC_008751.1"/>
</dbReference>
<dbReference type="SMR" id="A1VDU9"/>
<dbReference type="KEGG" id="dvl:Dvul_1598"/>
<dbReference type="HOGENOM" id="CLU_032616_0_1_7"/>
<dbReference type="Proteomes" id="UP000009173">
    <property type="component" value="Chromosome"/>
</dbReference>
<dbReference type="GO" id="GO:0005524">
    <property type="term" value="F:ATP binding"/>
    <property type="evidence" value="ECO:0007669"/>
    <property type="project" value="UniProtKB-UniRule"/>
</dbReference>
<dbReference type="GO" id="GO:0052381">
    <property type="term" value="F:tRNA dimethylallyltransferase activity"/>
    <property type="evidence" value="ECO:0007669"/>
    <property type="project" value="UniProtKB-UniRule"/>
</dbReference>
<dbReference type="GO" id="GO:0006400">
    <property type="term" value="P:tRNA modification"/>
    <property type="evidence" value="ECO:0007669"/>
    <property type="project" value="TreeGrafter"/>
</dbReference>
<dbReference type="Gene3D" id="1.10.20.140">
    <property type="match status" value="1"/>
</dbReference>
<dbReference type="Gene3D" id="3.40.50.300">
    <property type="entry name" value="P-loop containing nucleotide triphosphate hydrolases"/>
    <property type="match status" value="1"/>
</dbReference>
<dbReference type="HAMAP" id="MF_00185">
    <property type="entry name" value="IPP_trans"/>
    <property type="match status" value="1"/>
</dbReference>
<dbReference type="InterPro" id="IPR039657">
    <property type="entry name" value="Dimethylallyltransferase"/>
</dbReference>
<dbReference type="InterPro" id="IPR018022">
    <property type="entry name" value="IPT"/>
</dbReference>
<dbReference type="InterPro" id="IPR027417">
    <property type="entry name" value="P-loop_NTPase"/>
</dbReference>
<dbReference type="NCBIfam" id="TIGR00174">
    <property type="entry name" value="miaA"/>
    <property type="match status" value="1"/>
</dbReference>
<dbReference type="PANTHER" id="PTHR11088">
    <property type="entry name" value="TRNA DIMETHYLALLYLTRANSFERASE"/>
    <property type="match status" value="1"/>
</dbReference>
<dbReference type="PANTHER" id="PTHR11088:SF60">
    <property type="entry name" value="TRNA DIMETHYLALLYLTRANSFERASE"/>
    <property type="match status" value="1"/>
</dbReference>
<dbReference type="Pfam" id="PF01715">
    <property type="entry name" value="IPPT"/>
    <property type="match status" value="1"/>
</dbReference>
<dbReference type="SUPFAM" id="SSF52540">
    <property type="entry name" value="P-loop containing nucleoside triphosphate hydrolases"/>
    <property type="match status" value="1"/>
</dbReference>
<keyword id="KW-0067">ATP-binding</keyword>
<keyword id="KW-0460">Magnesium</keyword>
<keyword id="KW-0547">Nucleotide-binding</keyword>
<keyword id="KW-0808">Transferase</keyword>
<keyword id="KW-0819">tRNA processing</keyword>
<protein>
    <recommendedName>
        <fullName evidence="1">tRNA dimethylallyltransferase</fullName>
        <ecNumber evidence="1">2.5.1.75</ecNumber>
    </recommendedName>
    <alternativeName>
        <fullName evidence="1">Dimethylallyl diphosphate:tRNA dimethylallyltransferase</fullName>
        <shortName evidence="1">DMAPP:tRNA dimethylallyltransferase</shortName>
        <shortName evidence="1">DMATase</shortName>
    </alternativeName>
    <alternativeName>
        <fullName evidence="1">Isopentenyl-diphosphate:tRNA isopentenyltransferase</fullName>
        <shortName evidence="1">IPP transferase</shortName>
        <shortName evidence="1">IPPT</shortName>
        <shortName evidence="1">IPTase</shortName>
    </alternativeName>
</protein>
<name>MIAA_NITV4</name>
<gene>
    <name evidence="1" type="primary">miaA</name>
    <name type="ordered locus">Dvul_1598</name>
</gene>
<proteinExistence type="inferred from homology"/>
<evidence type="ECO:0000255" key="1">
    <source>
        <dbReference type="HAMAP-Rule" id="MF_00185"/>
    </source>
</evidence>
<reference key="1">
    <citation type="journal article" date="2009" name="Environ. Microbiol.">
        <title>Contribution of mobile genetic elements to Desulfovibrio vulgaris genome plasticity.</title>
        <authorList>
            <person name="Walker C.B."/>
            <person name="Stolyar S."/>
            <person name="Chivian D."/>
            <person name="Pinel N."/>
            <person name="Gabster J.A."/>
            <person name="Dehal P.S."/>
            <person name="He Z."/>
            <person name="Yang Z.K."/>
            <person name="Yen H.C."/>
            <person name="Zhou J."/>
            <person name="Wall J.D."/>
            <person name="Hazen T.C."/>
            <person name="Arkin A.P."/>
            <person name="Stahl D.A."/>
        </authorList>
    </citation>
    <scope>NUCLEOTIDE SEQUENCE [LARGE SCALE GENOMIC DNA]</scope>
    <source>
        <strain>DP4</strain>
    </source>
</reference>
<organism>
    <name type="scientific">Nitratidesulfovibrio vulgaris (strain DP4)</name>
    <name type="common">Desulfovibrio vulgaris</name>
    <dbReference type="NCBI Taxonomy" id="391774"/>
    <lineage>
        <taxon>Bacteria</taxon>
        <taxon>Pseudomonadati</taxon>
        <taxon>Thermodesulfobacteriota</taxon>
        <taxon>Desulfovibrionia</taxon>
        <taxon>Desulfovibrionales</taxon>
        <taxon>Desulfovibrionaceae</taxon>
        <taxon>Nitratidesulfovibrio</taxon>
    </lineage>
</organism>
<accession>A1VDU9</accession>